<keyword id="KW-0067">ATP-binding</keyword>
<keyword id="KW-0319">Glycerol metabolism</keyword>
<keyword id="KW-0418">Kinase</keyword>
<keyword id="KW-0547">Nucleotide-binding</keyword>
<keyword id="KW-0597">Phosphoprotein</keyword>
<keyword id="KW-0808">Transferase</keyword>
<dbReference type="EC" id="2.7.1.30" evidence="1"/>
<dbReference type="EMBL" id="AE015929">
    <property type="protein sequence ID" value="AAO04575.1"/>
    <property type="molecule type" value="Genomic_DNA"/>
</dbReference>
<dbReference type="RefSeq" id="NP_764533.1">
    <property type="nucleotide sequence ID" value="NC_004461.1"/>
</dbReference>
<dbReference type="RefSeq" id="WP_002439580.1">
    <property type="nucleotide sequence ID" value="NZ_WBME01000001.1"/>
</dbReference>
<dbReference type="SMR" id="Q8CSS0"/>
<dbReference type="KEGG" id="sep:SE_0978"/>
<dbReference type="PATRIC" id="fig|176280.10.peg.952"/>
<dbReference type="eggNOG" id="COG0554">
    <property type="taxonomic scope" value="Bacteria"/>
</dbReference>
<dbReference type="HOGENOM" id="CLU_009281_2_3_9"/>
<dbReference type="OrthoDB" id="9805576at2"/>
<dbReference type="UniPathway" id="UPA00618">
    <property type="reaction ID" value="UER00672"/>
</dbReference>
<dbReference type="Proteomes" id="UP000001411">
    <property type="component" value="Chromosome"/>
</dbReference>
<dbReference type="GO" id="GO:0005829">
    <property type="term" value="C:cytosol"/>
    <property type="evidence" value="ECO:0007669"/>
    <property type="project" value="TreeGrafter"/>
</dbReference>
<dbReference type="GO" id="GO:0005524">
    <property type="term" value="F:ATP binding"/>
    <property type="evidence" value="ECO:0007669"/>
    <property type="project" value="UniProtKB-UniRule"/>
</dbReference>
<dbReference type="GO" id="GO:0004370">
    <property type="term" value="F:glycerol kinase activity"/>
    <property type="evidence" value="ECO:0000250"/>
    <property type="project" value="UniProtKB"/>
</dbReference>
<dbReference type="GO" id="GO:0019563">
    <property type="term" value="P:glycerol catabolic process"/>
    <property type="evidence" value="ECO:0007669"/>
    <property type="project" value="UniProtKB-UniRule"/>
</dbReference>
<dbReference type="GO" id="GO:0006071">
    <property type="term" value="P:glycerol metabolic process"/>
    <property type="evidence" value="ECO:0000250"/>
    <property type="project" value="UniProtKB"/>
</dbReference>
<dbReference type="GO" id="GO:0006072">
    <property type="term" value="P:glycerol-3-phosphate metabolic process"/>
    <property type="evidence" value="ECO:0007669"/>
    <property type="project" value="InterPro"/>
</dbReference>
<dbReference type="CDD" id="cd07786">
    <property type="entry name" value="FGGY_EcGK_like"/>
    <property type="match status" value="1"/>
</dbReference>
<dbReference type="FunFam" id="3.30.420.40:FF:000007">
    <property type="entry name" value="Glycerol kinase"/>
    <property type="match status" value="1"/>
</dbReference>
<dbReference type="FunFam" id="3.30.420.40:FF:000008">
    <property type="entry name" value="Glycerol kinase"/>
    <property type="match status" value="1"/>
</dbReference>
<dbReference type="Gene3D" id="3.30.420.40">
    <property type="match status" value="2"/>
</dbReference>
<dbReference type="HAMAP" id="MF_00186">
    <property type="entry name" value="Glycerol_kin"/>
    <property type="match status" value="1"/>
</dbReference>
<dbReference type="InterPro" id="IPR043129">
    <property type="entry name" value="ATPase_NBD"/>
</dbReference>
<dbReference type="InterPro" id="IPR000577">
    <property type="entry name" value="Carb_kinase_FGGY"/>
</dbReference>
<dbReference type="InterPro" id="IPR018483">
    <property type="entry name" value="Carb_kinase_FGGY_CS"/>
</dbReference>
<dbReference type="InterPro" id="IPR018485">
    <property type="entry name" value="FGGY_C"/>
</dbReference>
<dbReference type="InterPro" id="IPR018484">
    <property type="entry name" value="FGGY_N"/>
</dbReference>
<dbReference type="InterPro" id="IPR005999">
    <property type="entry name" value="Glycerol_kin"/>
</dbReference>
<dbReference type="NCBIfam" id="TIGR01311">
    <property type="entry name" value="glycerol_kin"/>
    <property type="match status" value="1"/>
</dbReference>
<dbReference type="NCBIfam" id="NF000756">
    <property type="entry name" value="PRK00047.1"/>
    <property type="match status" value="1"/>
</dbReference>
<dbReference type="PANTHER" id="PTHR10196:SF69">
    <property type="entry name" value="GLYCEROL KINASE"/>
    <property type="match status" value="1"/>
</dbReference>
<dbReference type="PANTHER" id="PTHR10196">
    <property type="entry name" value="SUGAR KINASE"/>
    <property type="match status" value="1"/>
</dbReference>
<dbReference type="Pfam" id="PF02782">
    <property type="entry name" value="FGGY_C"/>
    <property type="match status" value="1"/>
</dbReference>
<dbReference type="Pfam" id="PF00370">
    <property type="entry name" value="FGGY_N"/>
    <property type="match status" value="1"/>
</dbReference>
<dbReference type="PIRSF" id="PIRSF000538">
    <property type="entry name" value="GlpK"/>
    <property type="match status" value="1"/>
</dbReference>
<dbReference type="SUPFAM" id="SSF53067">
    <property type="entry name" value="Actin-like ATPase domain"/>
    <property type="match status" value="2"/>
</dbReference>
<dbReference type="PROSITE" id="PS00445">
    <property type="entry name" value="FGGY_KINASES_2"/>
    <property type="match status" value="1"/>
</dbReference>
<name>GLPK_STAES</name>
<reference key="1">
    <citation type="journal article" date="2003" name="Mol. Microbiol.">
        <title>Genome-based analysis of virulence genes in a non-biofilm-forming Staphylococcus epidermidis strain (ATCC 12228).</title>
        <authorList>
            <person name="Zhang Y.-Q."/>
            <person name="Ren S.-X."/>
            <person name="Li H.-L."/>
            <person name="Wang Y.-X."/>
            <person name="Fu G."/>
            <person name="Yang J."/>
            <person name="Qin Z.-Q."/>
            <person name="Miao Y.-G."/>
            <person name="Wang W.-Y."/>
            <person name="Chen R.-S."/>
            <person name="Shen Y."/>
            <person name="Chen Z."/>
            <person name="Yuan Z.-H."/>
            <person name="Zhao G.-P."/>
            <person name="Qu D."/>
            <person name="Danchin A."/>
            <person name="Wen Y.-M."/>
        </authorList>
    </citation>
    <scope>NUCLEOTIDE SEQUENCE [LARGE SCALE GENOMIC DNA]</scope>
    <source>
        <strain>ATCC 12228 / FDA PCI 1200</strain>
    </source>
</reference>
<proteinExistence type="inferred from homology"/>
<protein>
    <recommendedName>
        <fullName evidence="1">Glycerol kinase</fullName>
        <ecNumber evidence="1">2.7.1.30</ecNumber>
    </recommendedName>
    <alternativeName>
        <fullName evidence="1">ATP:glycerol 3-phosphotransferase</fullName>
    </alternativeName>
    <alternativeName>
        <fullName evidence="1">Glycerokinase</fullName>
        <shortName evidence="1">GK</shortName>
    </alternativeName>
</protein>
<accession>Q8CSS0</accession>
<evidence type="ECO:0000255" key="1">
    <source>
        <dbReference type="HAMAP-Rule" id="MF_00186"/>
    </source>
</evidence>
<comment type="function">
    <text evidence="1">Key enzyme in the regulation of glycerol uptake and metabolism. Catalyzes the phosphorylation of glycerol to yield sn-glycerol 3-phosphate.</text>
</comment>
<comment type="catalytic activity">
    <reaction evidence="1">
        <text>glycerol + ATP = sn-glycerol 3-phosphate + ADP + H(+)</text>
        <dbReference type="Rhea" id="RHEA:21644"/>
        <dbReference type="ChEBI" id="CHEBI:15378"/>
        <dbReference type="ChEBI" id="CHEBI:17754"/>
        <dbReference type="ChEBI" id="CHEBI:30616"/>
        <dbReference type="ChEBI" id="CHEBI:57597"/>
        <dbReference type="ChEBI" id="CHEBI:456216"/>
        <dbReference type="EC" id="2.7.1.30"/>
    </reaction>
</comment>
<comment type="activity regulation">
    <text evidence="1">Activated by phosphorylation and inhibited by fructose 1,6-bisphosphate (FBP).</text>
</comment>
<comment type="pathway">
    <text evidence="1">Polyol metabolism; glycerol degradation via glycerol kinase pathway; sn-glycerol 3-phosphate from glycerol: step 1/1.</text>
</comment>
<comment type="subunit">
    <text evidence="1">Homotetramer and homodimer (in equilibrium).</text>
</comment>
<comment type="PTM">
    <text evidence="1">The phosphoenolpyruvate-dependent sugar phosphotransferase system (PTS), including enzyme I, and histidine-containing protein (HPr) are required for the phosphorylation, which leads to the activation of the enzyme.</text>
</comment>
<comment type="similarity">
    <text evidence="1">Belongs to the FGGY kinase family.</text>
</comment>
<feature type="chain" id="PRO_0000059495" description="Glycerol kinase">
    <location>
        <begin position="1"/>
        <end position="499"/>
    </location>
</feature>
<feature type="binding site" evidence="1">
    <location>
        <position position="12"/>
    </location>
    <ligand>
        <name>ADP</name>
        <dbReference type="ChEBI" id="CHEBI:456216"/>
    </ligand>
</feature>
<feature type="binding site" evidence="1">
    <location>
        <position position="12"/>
    </location>
    <ligand>
        <name>ATP</name>
        <dbReference type="ChEBI" id="CHEBI:30616"/>
    </ligand>
</feature>
<feature type="binding site" evidence="1">
    <location>
        <position position="12"/>
    </location>
    <ligand>
        <name>sn-glycerol 3-phosphate</name>
        <dbReference type="ChEBI" id="CHEBI:57597"/>
    </ligand>
</feature>
<feature type="binding site" evidence="1">
    <location>
        <position position="13"/>
    </location>
    <ligand>
        <name>ATP</name>
        <dbReference type="ChEBI" id="CHEBI:30616"/>
    </ligand>
</feature>
<feature type="binding site" evidence="1">
    <location>
        <position position="14"/>
    </location>
    <ligand>
        <name>ATP</name>
        <dbReference type="ChEBI" id="CHEBI:30616"/>
    </ligand>
</feature>
<feature type="binding site" evidence="1">
    <location>
        <position position="16"/>
    </location>
    <ligand>
        <name>ADP</name>
        <dbReference type="ChEBI" id="CHEBI:456216"/>
    </ligand>
</feature>
<feature type="binding site" evidence="1">
    <location>
        <position position="82"/>
    </location>
    <ligand>
        <name>glycerol</name>
        <dbReference type="ChEBI" id="CHEBI:17754"/>
    </ligand>
</feature>
<feature type="binding site" evidence="1">
    <location>
        <position position="82"/>
    </location>
    <ligand>
        <name>sn-glycerol 3-phosphate</name>
        <dbReference type="ChEBI" id="CHEBI:57597"/>
    </ligand>
</feature>
<feature type="binding site" evidence="1">
    <location>
        <position position="83"/>
    </location>
    <ligand>
        <name>glycerol</name>
        <dbReference type="ChEBI" id="CHEBI:17754"/>
    </ligand>
</feature>
<feature type="binding site" evidence="1">
    <location>
        <position position="83"/>
    </location>
    <ligand>
        <name>sn-glycerol 3-phosphate</name>
        <dbReference type="ChEBI" id="CHEBI:57597"/>
    </ligand>
</feature>
<feature type="binding site" evidence="1">
    <location>
        <position position="134"/>
    </location>
    <ligand>
        <name>glycerol</name>
        <dbReference type="ChEBI" id="CHEBI:17754"/>
    </ligand>
</feature>
<feature type="binding site" evidence="1">
    <location>
        <position position="134"/>
    </location>
    <ligand>
        <name>sn-glycerol 3-phosphate</name>
        <dbReference type="ChEBI" id="CHEBI:57597"/>
    </ligand>
</feature>
<feature type="binding site" evidence="1">
    <location>
        <position position="244"/>
    </location>
    <ligand>
        <name>glycerol</name>
        <dbReference type="ChEBI" id="CHEBI:17754"/>
    </ligand>
</feature>
<feature type="binding site" evidence="1">
    <location>
        <position position="244"/>
    </location>
    <ligand>
        <name>sn-glycerol 3-phosphate</name>
        <dbReference type="ChEBI" id="CHEBI:57597"/>
    </ligand>
</feature>
<feature type="binding site" evidence="1">
    <location>
        <position position="245"/>
    </location>
    <ligand>
        <name>glycerol</name>
        <dbReference type="ChEBI" id="CHEBI:17754"/>
    </ligand>
</feature>
<feature type="binding site" evidence="1">
    <location>
        <position position="266"/>
    </location>
    <ligand>
        <name>ADP</name>
        <dbReference type="ChEBI" id="CHEBI:456216"/>
    </ligand>
</feature>
<feature type="binding site" evidence="1">
    <location>
        <position position="266"/>
    </location>
    <ligand>
        <name>ATP</name>
        <dbReference type="ChEBI" id="CHEBI:30616"/>
    </ligand>
</feature>
<feature type="binding site" evidence="1">
    <location>
        <position position="309"/>
    </location>
    <ligand>
        <name>ADP</name>
        <dbReference type="ChEBI" id="CHEBI:456216"/>
    </ligand>
</feature>
<feature type="binding site" evidence="1">
    <location>
        <position position="309"/>
    </location>
    <ligand>
        <name>ATP</name>
        <dbReference type="ChEBI" id="CHEBI:30616"/>
    </ligand>
</feature>
<feature type="binding site" evidence="1">
    <location>
        <position position="313"/>
    </location>
    <ligand>
        <name>ATP</name>
        <dbReference type="ChEBI" id="CHEBI:30616"/>
    </ligand>
</feature>
<feature type="binding site" evidence="1">
    <location>
        <position position="410"/>
    </location>
    <ligand>
        <name>ADP</name>
        <dbReference type="ChEBI" id="CHEBI:456216"/>
    </ligand>
</feature>
<feature type="binding site" evidence="1">
    <location>
        <position position="410"/>
    </location>
    <ligand>
        <name>ATP</name>
        <dbReference type="ChEBI" id="CHEBI:30616"/>
    </ligand>
</feature>
<feature type="binding site" evidence="1">
    <location>
        <position position="414"/>
    </location>
    <ligand>
        <name>ADP</name>
        <dbReference type="ChEBI" id="CHEBI:456216"/>
    </ligand>
</feature>
<feature type="modified residue" description="Phosphohistidine; by HPr" evidence="1">
    <location>
        <position position="230"/>
    </location>
</feature>
<sequence length="499" mass="56325">MEKYILSIDQGTTSSRAILFNKEGEIKGVSQREFKQHFPHPGWVEHDANEIWTSVLSVMAELLNENNINANQIEGIGITNQRETTVVWDKNTGRPIYHAIVWQSRQTQDICTNLKEQGYEETFREKTGLLLDPYFAGTKVKWILDHVEGAREKAENGDLLFGTIDSWLVWKLSGRTAHITDYTNASRTLMFNIYDLKWDDELLELLNIPKQMLPEVKESSEIYGKTIDYHFFGQEVPIAGIAGDQQAALFGQACFDRGDVKNTYGTGGFMLMNTGEEAVKSESGLLTTIAYGLDGKVNYALEGSIFVSGSAIQWLRDGLRMINSAPQTENYASRVESTEGVYMVPAFVGLGTPYWDSEARGAIFGLSRGTEKEHFIRATLESLCYQTRDVMEAMSKDSGIEVQNLRVDGGAVKNNFIMQFQADIVNSSVERPEIQETTALGAAYLAGLAVGFWDDKEDIRERWKLQTEFKPEMDEDQRHKLYSGWKKAVKATQVFKLED</sequence>
<organism>
    <name type="scientific">Staphylococcus epidermidis (strain ATCC 12228 / FDA PCI 1200)</name>
    <dbReference type="NCBI Taxonomy" id="176280"/>
    <lineage>
        <taxon>Bacteria</taxon>
        <taxon>Bacillati</taxon>
        <taxon>Bacillota</taxon>
        <taxon>Bacilli</taxon>
        <taxon>Bacillales</taxon>
        <taxon>Staphylococcaceae</taxon>
        <taxon>Staphylococcus</taxon>
    </lineage>
</organism>
<gene>
    <name evidence="1" type="primary">glpK</name>
    <name type="ordered locus">SE_0978</name>
</gene>